<accession>P00080</accession>
<protein>
    <recommendedName>
        <fullName>Cytochrome c2</fullName>
    </recommendedName>
</protein>
<organism>
    <name type="scientific">Rhodopila globiformis</name>
    <name type="common">Rhodopseudomonas globiformis</name>
    <dbReference type="NCBI Taxonomy" id="1071"/>
    <lineage>
        <taxon>Bacteria</taxon>
        <taxon>Pseudomonadati</taxon>
        <taxon>Pseudomonadota</taxon>
        <taxon>Alphaproteobacteria</taxon>
        <taxon>Acetobacterales</taxon>
        <taxon>Acetobacteraceae</taxon>
        <taxon>Rhodopila</taxon>
    </lineage>
</organism>
<proteinExistence type="evidence at protein level"/>
<comment type="biophysicochemical properties">
    <redoxPotential>
        <text>E(0) is +450 mV.</text>
    </redoxPotential>
</comment>
<comment type="PTM">
    <text>Binds 1 heme c group covalently per subunit.</text>
</comment>
<comment type="similarity">
    <text evidence="3">Belongs to the cytochrome c family.</text>
</comment>
<reference key="1">
    <citation type="journal article" date="1987" name="Biochem. J.">
        <title>The amino acid sequence of the cytochrome c2 from the phototrophic bacterium Rhodopseudomonas globiformis.</title>
        <authorList>
            <person name="Ambler R.P."/>
            <person name="Meyer T.E."/>
            <person name="Cusanovich M.A."/>
            <person name="Kamen M.D."/>
        </authorList>
    </citation>
    <scope>PROTEIN SEQUENCE</scope>
</reference>
<reference key="2">
    <citation type="book" date="1979" name="Abstracts of the 3rd international symposium on photosynthetic prokaryotes (Oxford)">
        <editorList>
            <person name="Nichols J.M."/>
        </editorList>
        <authorList>
            <person name="Ambler R.P."/>
        </authorList>
    </citation>
    <scope>PROTEIN SEQUENCE</scope>
</reference>
<reference key="3">
    <citation type="journal article" date="1996" name="Arch. Biochem. Biophys.">
        <title>Molecular structure of a high potential cytochrome c2 isolated from Rhodopila globiformis.</title>
        <authorList>
            <person name="Benning M.M."/>
            <person name="Meyer T.E."/>
            <person name="Holden H.M."/>
        </authorList>
    </citation>
    <scope>X-RAY CRYSTALLOGRAPHY (2.2 ANGSTROMS)</scope>
</reference>
<keyword id="KW-0002">3D-structure</keyword>
<keyword id="KW-0903">Direct protein sequencing</keyword>
<keyword id="KW-0249">Electron transport</keyword>
<keyword id="KW-0349">Heme</keyword>
<keyword id="KW-0408">Iron</keyword>
<keyword id="KW-0479">Metal-binding</keyword>
<keyword id="KW-0602">Photosynthesis</keyword>
<keyword id="KW-0813">Transport</keyword>
<sequence>GSAPPGDPVEGKHLFHTICILCHTDIKGRNKVGPSLYGVVGRHSGIEPGYNYSEANIKSGIVWTPDVLFKYIEHPQKIVPGTKMGYPGQPDPQKRADIIAYLETLK</sequence>
<evidence type="ECO:0000255" key="1">
    <source>
        <dbReference type="PROSITE-ProRule" id="PRU00433"/>
    </source>
</evidence>
<evidence type="ECO:0000269" key="2">
    <source>
    </source>
</evidence>
<evidence type="ECO:0000305" key="3"/>
<evidence type="ECO:0007829" key="4">
    <source>
        <dbReference type="PDB" id="1HRO"/>
    </source>
</evidence>
<feature type="chain" id="PRO_0000108344" description="Cytochrome c2">
    <location>
        <begin position="1"/>
        <end position="106"/>
    </location>
</feature>
<feature type="binding site" description="covalent" evidence="1 2">
    <location>
        <position position="19"/>
    </location>
    <ligand>
        <name>heme c</name>
        <dbReference type="ChEBI" id="CHEBI:61717"/>
    </ligand>
</feature>
<feature type="binding site" description="covalent" evidence="1 2">
    <location>
        <position position="22"/>
    </location>
    <ligand>
        <name>heme c</name>
        <dbReference type="ChEBI" id="CHEBI:61717"/>
    </ligand>
</feature>
<feature type="binding site" description="axial binding residue">
    <location>
        <position position="23"/>
    </location>
    <ligand>
        <name>heme c</name>
        <dbReference type="ChEBI" id="CHEBI:61717"/>
    </ligand>
    <ligandPart>
        <name>Fe</name>
        <dbReference type="ChEBI" id="CHEBI:18248"/>
    </ligandPart>
</feature>
<feature type="binding site" description="axial binding residue">
    <location>
        <position position="84"/>
    </location>
    <ligand>
        <name>heme c</name>
        <dbReference type="ChEBI" id="CHEBI:61717"/>
    </ligand>
    <ligandPart>
        <name>Fe</name>
        <dbReference type="ChEBI" id="CHEBI:18248"/>
    </ligandPart>
</feature>
<feature type="helix" evidence="4">
    <location>
        <begin position="8"/>
        <end position="15"/>
    </location>
</feature>
<feature type="turn" evidence="4">
    <location>
        <begin position="16"/>
        <end position="18"/>
    </location>
</feature>
<feature type="helix" evidence="4">
    <location>
        <begin position="19"/>
        <end position="21"/>
    </location>
</feature>
<feature type="strand" evidence="4">
    <location>
        <begin position="30"/>
        <end position="33"/>
    </location>
</feature>
<feature type="helix" evidence="4">
    <location>
        <begin position="54"/>
        <end position="59"/>
    </location>
</feature>
<feature type="helix" evidence="4">
    <location>
        <begin position="65"/>
        <end position="73"/>
    </location>
</feature>
<feature type="helix" evidence="4">
    <location>
        <begin position="75"/>
        <end position="78"/>
    </location>
</feature>
<feature type="helix" evidence="4">
    <location>
        <begin position="92"/>
        <end position="102"/>
    </location>
</feature>
<name>CYC2_RHOGL</name>
<dbReference type="PIR" id="A32518">
    <property type="entry name" value="CCRF2G"/>
</dbReference>
<dbReference type="PDB" id="1HRO">
    <property type="method" value="X-ray"/>
    <property type="resolution" value="2.20 A"/>
    <property type="chains" value="A/B=1-106"/>
</dbReference>
<dbReference type="PDBsum" id="1HRO"/>
<dbReference type="SMR" id="P00080"/>
<dbReference type="EvolutionaryTrace" id="P00080"/>
<dbReference type="GO" id="GO:0009055">
    <property type="term" value="F:electron transfer activity"/>
    <property type="evidence" value="ECO:0007669"/>
    <property type="project" value="InterPro"/>
</dbReference>
<dbReference type="GO" id="GO:0020037">
    <property type="term" value="F:heme binding"/>
    <property type="evidence" value="ECO:0007669"/>
    <property type="project" value="InterPro"/>
</dbReference>
<dbReference type="GO" id="GO:0046872">
    <property type="term" value="F:metal ion binding"/>
    <property type="evidence" value="ECO:0007669"/>
    <property type="project" value="UniProtKB-KW"/>
</dbReference>
<dbReference type="GO" id="GO:0015979">
    <property type="term" value="P:photosynthesis"/>
    <property type="evidence" value="ECO:0007669"/>
    <property type="project" value="UniProtKB-KW"/>
</dbReference>
<dbReference type="Gene3D" id="1.10.760.10">
    <property type="entry name" value="Cytochrome c-like domain"/>
    <property type="match status" value="1"/>
</dbReference>
<dbReference type="InterPro" id="IPR009056">
    <property type="entry name" value="Cyt_c-like_dom"/>
</dbReference>
<dbReference type="InterPro" id="IPR036909">
    <property type="entry name" value="Cyt_c-like_dom_sf"/>
</dbReference>
<dbReference type="InterPro" id="IPR002327">
    <property type="entry name" value="Cyt_c_1A/1B"/>
</dbReference>
<dbReference type="PANTHER" id="PTHR11961">
    <property type="entry name" value="CYTOCHROME C"/>
    <property type="match status" value="1"/>
</dbReference>
<dbReference type="Pfam" id="PF00034">
    <property type="entry name" value="Cytochrom_C"/>
    <property type="match status" value="1"/>
</dbReference>
<dbReference type="PRINTS" id="PR00604">
    <property type="entry name" value="CYTCHRMECIAB"/>
</dbReference>
<dbReference type="SUPFAM" id="SSF46626">
    <property type="entry name" value="Cytochrome c"/>
    <property type="match status" value="1"/>
</dbReference>
<dbReference type="PROSITE" id="PS51007">
    <property type="entry name" value="CYTC"/>
    <property type="match status" value="1"/>
</dbReference>